<name>YQGF_DICTD</name>
<evidence type="ECO:0000255" key="1">
    <source>
        <dbReference type="HAMAP-Rule" id="MF_00651"/>
    </source>
</evidence>
<sequence length="141" mass="16470">MRVLAIDWGEKYIGLAISDPLRIIAQGLDVWEIKDEEDFVNRLKKLIKEYNVSEIVLGYPISLRGHENEKTKKIEYVAERIKTVVNLPIKFVDERFTTMEAERVLLEGDIKRRDRKLLKNKQAAVIILQKYLDSLSLDTKI</sequence>
<gene>
    <name type="ordered locus">Dtur_1024</name>
</gene>
<reference key="1">
    <citation type="journal article" date="2016" name="Front. Microbiol.">
        <title>The complete genome sequence of hyperthermophile Dictyoglomus turgidum DSM 6724 reveals a specialized carbohydrate fermentor.</title>
        <authorList>
            <person name="Brumm P.J."/>
            <person name="Gowda K."/>
            <person name="Robb F.T."/>
            <person name="Mead D.A."/>
        </authorList>
    </citation>
    <scope>NUCLEOTIDE SEQUENCE [LARGE SCALE GENOMIC DNA]</scope>
    <source>
        <strain>DSM 6724 / Z-1310</strain>
    </source>
</reference>
<protein>
    <recommendedName>
        <fullName evidence="1">Putative pre-16S rRNA nuclease</fullName>
        <ecNumber evidence="1">3.1.-.-</ecNumber>
    </recommendedName>
</protein>
<keyword id="KW-0963">Cytoplasm</keyword>
<keyword id="KW-0378">Hydrolase</keyword>
<keyword id="KW-0540">Nuclease</keyword>
<keyword id="KW-1185">Reference proteome</keyword>
<keyword id="KW-0690">Ribosome biogenesis</keyword>
<accession>B8E227</accession>
<comment type="function">
    <text evidence="1">Could be a nuclease involved in processing of the 5'-end of pre-16S rRNA.</text>
</comment>
<comment type="subcellular location">
    <subcellularLocation>
        <location evidence="1">Cytoplasm</location>
    </subcellularLocation>
</comment>
<comment type="similarity">
    <text evidence="1">Belongs to the YqgF nuclease family.</text>
</comment>
<organism>
    <name type="scientific">Dictyoglomus turgidum (strain DSM 6724 / Z-1310)</name>
    <dbReference type="NCBI Taxonomy" id="515635"/>
    <lineage>
        <taxon>Bacteria</taxon>
        <taxon>Pseudomonadati</taxon>
        <taxon>Dictyoglomota</taxon>
        <taxon>Dictyoglomia</taxon>
        <taxon>Dictyoglomales</taxon>
        <taxon>Dictyoglomaceae</taxon>
        <taxon>Dictyoglomus</taxon>
    </lineage>
</organism>
<feature type="chain" id="PRO_1000131026" description="Putative pre-16S rRNA nuclease">
    <location>
        <begin position="1"/>
        <end position="141"/>
    </location>
</feature>
<proteinExistence type="inferred from homology"/>
<dbReference type="EC" id="3.1.-.-" evidence="1"/>
<dbReference type="EMBL" id="CP001251">
    <property type="protein sequence ID" value="ACK42304.1"/>
    <property type="molecule type" value="Genomic_DNA"/>
</dbReference>
<dbReference type="RefSeq" id="YP_002352918.1">
    <property type="nucleotide sequence ID" value="NC_011661.1"/>
</dbReference>
<dbReference type="SMR" id="B8E227"/>
<dbReference type="FunCoup" id="B8E227">
    <property type="interactions" value="268"/>
</dbReference>
<dbReference type="STRING" id="515635.Dtur_1024"/>
<dbReference type="EnsemblBacteria" id="ACK42304">
    <property type="protein sequence ID" value="ACK42304"/>
    <property type="gene ID" value="Dtur_1024"/>
</dbReference>
<dbReference type="KEGG" id="dtu:Dtur_1024"/>
<dbReference type="eggNOG" id="COG0816">
    <property type="taxonomic scope" value="Bacteria"/>
</dbReference>
<dbReference type="HOGENOM" id="CLU_098240_2_1_0"/>
<dbReference type="InParanoid" id="B8E227"/>
<dbReference type="OrthoDB" id="9796140at2"/>
<dbReference type="Proteomes" id="UP000007719">
    <property type="component" value="Chromosome"/>
</dbReference>
<dbReference type="GO" id="GO:0005737">
    <property type="term" value="C:cytoplasm"/>
    <property type="evidence" value="ECO:0007669"/>
    <property type="project" value="UniProtKB-SubCell"/>
</dbReference>
<dbReference type="GO" id="GO:0004518">
    <property type="term" value="F:nuclease activity"/>
    <property type="evidence" value="ECO:0007669"/>
    <property type="project" value="UniProtKB-KW"/>
</dbReference>
<dbReference type="GO" id="GO:0000967">
    <property type="term" value="P:rRNA 5'-end processing"/>
    <property type="evidence" value="ECO:0000318"/>
    <property type="project" value="GO_Central"/>
</dbReference>
<dbReference type="CDD" id="cd16964">
    <property type="entry name" value="YqgF"/>
    <property type="match status" value="1"/>
</dbReference>
<dbReference type="FunFam" id="3.30.420.140:FF:000005">
    <property type="entry name" value="Putative pre-16S rRNA nuclease"/>
    <property type="match status" value="1"/>
</dbReference>
<dbReference type="Gene3D" id="3.30.420.140">
    <property type="entry name" value="YqgF/RNase H-like domain"/>
    <property type="match status" value="1"/>
</dbReference>
<dbReference type="HAMAP" id="MF_00651">
    <property type="entry name" value="Nuclease_YqgF"/>
    <property type="match status" value="1"/>
</dbReference>
<dbReference type="InterPro" id="IPR012337">
    <property type="entry name" value="RNaseH-like_sf"/>
</dbReference>
<dbReference type="InterPro" id="IPR005227">
    <property type="entry name" value="YqgF"/>
</dbReference>
<dbReference type="InterPro" id="IPR006641">
    <property type="entry name" value="YqgF/RNaseH-like_dom"/>
</dbReference>
<dbReference type="InterPro" id="IPR037027">
    <property type="entry name" value="YqgF/RNaseH-like_dom_sf"/>
</dbReference>
<dbReference type="NCBIfam" id="TIGR00250">
    <property type="entry name" value="RNAse_H_YqgF"/>
    <property type="match status" value="1"/>
</dbReference>
<dbReference type="PANTHER" id="PTHR33317">
    <property type="entry name" value="POLYNUCLEOTIDYL TRANSFERASE, RIBONUCLEASE H-LIKE SUPERFAMILY PROTEIN"/>
    <property type="match status" value="1"/>
</dbReference>
<dbReference type="PANTHER" id="PTHR33317:SF4">
    <property type="entry name" value="POLYNUCLEOTIDYL TRANSFERASE, RIBONUCLEASE H-LIKE SUPERFAMILY PROTEIN"/>
    <property type="match status" value="1"/>
</dbReference>
<dbReference type="Pfam" id="PF03652">
    <property type="entry name" value="RuvX"/>
    <property type="match status" value="1"/>
</dbReference>
<dbReference type="SMART" id="SM00732">
    <property type="entry name" value="YqgFc"/>
    <property type="match status" value="1"/>
</dbReference>
<dbReference type="SUPFAM" id="SSF53098">
    <property type="entry name" value="Ribonuclease H-like"/>
    <property type="match status" value="1"/>
</dbReference>